<organism>
    <name type="scientific">Staphylococcus aureus (strain JH9)</name>
    <dbReference type="NCBI Taxonomy" id="359786"/>
    <lineage>
        <taxon>Bacteria</taxon>
        <taxon>Bacillati</taxon>
        <taxon>Bacillota</taxon>
        <taxon>Bacilli</taxon>
        <taxon>Bacillales</taxon>
        <taxon>Staphylococcaceae</taxon>
        <taxon>Staphylococcus</taxon>
    </lineage>
</organism>
<gene>
    <name type="ordered locus">SaurJH9_1898</name>
</gene>
<proteinExistence type="inferred from homology"/>
<accession>A5IU10</accession>
<dbReference type="EMBL" id="CP000703">
    <property type="protein sequence ID" value="ABQ49683.1"/>
    <property type="molecule type" value="Genomic_DNA"/>
</dbReference>
<dbReference type="RefSeq" id="WP_000290301.1">
    <property type="nucleotide sequence ID" value="NC_009487.1"/>
</dbReference>
<dbReference type="SMR" id="A5IU10"/>
<dbReference type="KEGG" id="saj:SaurJH9_1898"/>
<dbReference type="HOGENOM" id="CLU_140243_3_0_9"/>
<dbReference type="Gene3D" id="1.20.1500.10">
    <property type="entry name" value="YheA/YmcA-like"/>
    <property type="match status" value="1"/>
</dbReference>
<dbReference type="HAMAP" id="MF_01526">
    <property type="entry name" value="UPF0342"/>
    <property type="match status" value="1"/>
</dbReference>
<dbReference type="InterPro" id="IPR010368">
    <property type="entry name" value="Com_YlbF"/>
</dbReference>
<dbReference type="InterPro" id="IPR023378">
    <property type="entry name" value="YheA/YmcA-like_dom_sf"/>
</dbReference>
<dbReference type="NCBIfam" id="NF010212">
    <property type="entry name" value="PRK13676.1-5"/>
    <property type="match status" value="1"/>
</dbReference>
<dbReference type="Pfam" id="PF06133">
    <property type="entry name" value="Com_YlbF"/>
    <property type="match status" value="1"/>
</dbReference>
<dbReference type="SUPFAM" id="SSF158622">
    <property type="entry name" value="YheA/YmcA-like"/>
    <property type="match status" value="1"/>
</dbReference>
<evidence type="ECO:0000255" key="1">
    <source>
        <dbReference type="HAMAP-Rule" id="MF_01526"/>
    </source>
</evidence>
<reference key="1">
    <citation type="submission" date="2007-05" db="EMBL/GenBank/DDBJ databases">
        <title>Complete sequence of chromosome of Staphylococcus aureus subsp. aureus JH9.</title>
        <authorList>
            <consortium name="US DOE Joint Genome Institute"/>
            <person name="Copeland A."/>
            <person name="Lucas S."/>
            <person name="Lapidus A."/>
            <person name="Barry K."/>
            <person name="Detter J.C."/>
            <person name="Glavina del Rio T."/>
            <person name="Hammon N."/>
            <person name="Israni S."/>
            <person name="Pitluck S."/>
            <person name="Chain P."/>
            <person name="Malfatti S."/>
            <person name="Shin M."/>
            <person name="Vergez L."/>
            <person name="Schmutz J."/>
            <person name="Larimer F."/>
            <person name="Land M."/>
            <person name="Hauser L."/>
            <person name="Kyrpides N."/>
            <person name="Kim E."/>
            <person name="Tomasz A."/>
            <person name="Richardson P."/>
        </authorList>
    </citation>
    <scope>NUCLEOTIDE SEQUENCE [LARGE SCALE GENOMIC DNA]</scope>
    <source>
        <strain>JH9</strain>
    </source>
</reference>
<comment type="similarity">
    <text evidence="1">Belongs to the UPF0342 family.</text>
</comment>
<protein>
    <recommendedName>
        <fullName evidence="1">UPF0342 protein SaurJH9_1898</fullName>
    </recommendedName>
</protein>
<feature type="chain" id="PRO_1000087577" description="UPF0342 protein SaurJH9_1898">
    <location>
        <begin position="1"/>
        <end position="114"/>
    </location>
</feature>
<name>Y1898_STAA9</name>
<sequence>MAVNLYDYANQLEQALRESEEYKAIKEAFANVKANEESKKLFDEFRETQINFQQKQMQGEEIAEEDLQKAQEQAQAIEKDENISALMNAEQKMSQVFQEINQIIVKPLDEIYAD</sequence>